<comment type="function">
    <text evidence="2">Catalyzes the conversion of the 17-keto group of estrone, 4- and 5-androstenes and 5-alpha-androstanes into their 17-beta-hydroxyl metabolites and the conversion of the 3-keto group of 3-, 3,17- and 3,20- diketosteroids into their 3-hydroxyl metabolites. Exhibits reductive 3-beta-hydroxysteroid dehydrogenase activity toward 5-beta-androstanes, 5-beta-pregnanes, 4-pregnenes and bile acids. May also reduce endogenous and exogenous alpha-dicarbonyl compounds and xenobiotic alicyclic ketones.</text>
</comment>
<comment type="catalytic activity">
    <reaction evidence="2">
        <text>a 3beta-hydroxysteroid + NADP(+) = a 3-oxosteroid + NADPH + H(+)</text>
        <dbReference type="Rhea" id="RHEA:34787"/>
        <dbReference type="ChEBI" id="CHEBI:15378"/>
        <dbReference type="ChEBI" id="CHEBI:36836"/>
        <dbReference type="ChEBI" id="CHEBI:47788"/>
        <dbReference type="ChEBI" id="CHEBI:57783"/>
        <dbReference type="ChEBI" id="CHEBI:58349"/>
        <dbReference type="EC" id="1.1.1.270"/>
    </reaction>
</comment>
<comment type="catalytic activity">
    <reaction evidence="2">
        <text>17beta-estradiol + NAD(+) = estrone + NADH + H(+)</text>
        <dbReference type="Rhea" id="RHEA:24612"/>
        <dbReference type="ChEBI" id="CHEBI:15378"/>
        <dbReference type="ChEBI" id="CHEBI:16469"/>
        <dbReference type="ChEBI" id="CHEBI:17263"/>
        <dbReference type="ChEBI" id="CHEBI:57540"/>
        <dbReference type="ChEBI" id="CHEBI:57945"/>
        <dbReference type="EC" id="1.1.1.62"/>
    </reaction>
</comment>
<comment type="catalytic activity">
    <reaction evidence="2">
        <text>17beta-estradiol + NADP(+) = estrone + NADPH + H(+)</text>
        <dbReference type="Rhea" id="RHEA:24616"/>
        <dbReference type="ChEBI" id="CHEBI:15378"/>
        <dbReference type="ChEBI" id="CHEBI:16469"/>
        <dbReference type="ChEBI" id="CHEBI:17263"/>
        <dbReference type="ChEBI" id="CHEBI:57783"/>
        <dbReference type="ChEBI" id="CHEBI:58349"/>
        <dbReference type="EC" id="1.1.1.62"/>
    </reaction>
</comment>
<comment type="activity regulation">
    <text evidence="2">Inhibited by flavonoids including apigenin, luteolin, genistein, kaempferol and quercetin and also by carbenoxolone, zearalenone, glycyrrhetinic, curcumin and flufenamic acid.</text>
</comment>
<comment type="pathway">
    <text evidence="2">Steroid biosynthesis; estrogen biosynthesis.</text>
</comment>
<comment type="subcellular location">
    <subcellularLocation>
        <location evidence="4">Secreted</location>
    </subcellularLocation>
</comment>
<comment type="similarity">
    <text evidence="4">Belongs to the short-chain dehydrogenases/reductases (SDR) family.</text>
</comment>
<organism>
    <name type="scientific">Bos taurus</name>
    <name type="common">Bovine</name>
    <dbReference type="NCBI Taxonomy" id="9913"/>
    <lineage>
        <taxon>Eukaryota</taxon>
        <taxon>Metazoa</taxon>
        <taxon>Chordata</taxon>
        <taxon>Craniata</taxon>
        <taxon>Vertebrata</taxon>
        <taxon>Euteleostomi</taxon>
        <taxon>Mammalia</taxon>
        <taxon>Eutheria</taxon>
        <taxon>Laurasiatheria</taxon>
        <taxon>Artiodactyla</taxon>
        <taxon>Ruminantia</taxon>
        <taxon>Pecora</taxon>
        <taxon>Bovidae</taxon>
        <taxon>Bovinae</taxon>
        <taxon>Bos</taxon>
    </lineage>
</organism>
<feature type="signal peptide" evidence="3">
    <location>
        <begin position="1"/>
        <end position="25"/>
    </location>
</feature>
<feature type="chain" id="PRO_0000045489" description="Dehydrogenase/reductase SDR family member 11">
    <location>
        <begin position="26"/>
        <end position="255"/>
    </location>
</feature>
<feature type="active site" description="Proton acceptor" evidence="1">
    <location>
        <position position="161"/>
    </location>
</feature>
<feature type="binding site" evidence="2">
    <location>
        <begin position="13"/>
        <end position="18"/>
    </location>
    <ligand>
        <name>NADP(+)</name>
        <dbReference type="ChEBI" id="CHEBI:58349"/>
    </ligand>
</feature>
<feature type="binding site" evidence="2">
    <location>
        <begin position="38"/>
        <end position="39"/>
    </location>
    <ligand>
        <name>NADP(+)</name>
        <dbReference type="ChEBI" id="CHEBI:58349"/>
    </ligand>
</feature>
<feature type="binding site" evidence="2">
    <location>
        <position position="44"/>
    </location>
    <ligand>
        <name>NADP(+)</name>
        <dbReference type="ChEBI" id="CHEBI:58349"/>
    </ligand>
</feature>
<feature type="binding site" evidence="2">
    <location>
        <begin position="65"/>
        <end position="66"/>
    </location>
    <ligand>
        <name>NADP(+)</name>
        <dbReference type="ChEBI" id="CHEBI:58349"/>
    </ligand>
</feature>
<feature type="binding site" evidence="2">
    <location>
        <position position="92"/>
    </location>
    <ligand>
        <name>NADP(+)</name>
        <dbReference type="ChEBI" id="CHEBI:58349"/>
    </ligand>
</feature>
<feature type="binding site" evidence="2">
    <location>
        <position position="146"/>
    </location>
    <ligand>
        <name>substrate</name>
    </ligand>
</feature>
<feature type="binding site" evidence="2">
    <location>
        <position position="161"/>
    </location>
    <ligand>
        <name>NADP(+)</name>
        <dbReference type="ChEBI" id="CHEBI:58349"/>
    </ligand>
</feature>
<feature type="binding site" evidence="2">
    <location>
        <position position="161"/>
    </location>
    <ligand>
        <name>substrate</name>
    </ligand>
</feature>
<feature type="binding site" evidence="2">
    <location>
        <position position="165"/>
    </location>
    <ligand>
        <name>NADP(+)</name>
        <dbReference type="ChEBI" id="CHEBI:58349"/>
    </ligand>
</feature>
<feature type="binding site" evidence="2">
    <location>
        <begin position="196"/>
        <end position="199"/>
    </location>
    <ligand>
        <name>NADP(+)</name>
        <dbReference type="ChEBI" id="CHEBI:58349"/>
    </ligand>
</feature>
<feature type="binding site" evidence="2">
    <location>
        <position position="203"/>
    </location>
    <ligand>
        <name>NADP(+)</name>
        <dbReference type="ChEBI" id="CHEBI:58349"/>
    </ligand>
</feature>
<gene>
    <name type="primary">DHRS11</name>
    <name evidence="2" type="synonym">SDR24C1</name>
</gene>
<keyword id="KW-0443">Lipid metabolism</keyword>
<keyword id="KW-0521">NADP</keyword>
<keyword id="KW-0547">Nucleotide-binding</keyword>
<keyword id="KW-0560">Oxidoreductase</keyword>
<keyword id="KW-1185">Reference proteome</keyword>
<keyword id="KW-0964">Secreted</keyword>
<keyword id="KW-0732">Signal</keyword>
<keyword id="KW-0753">Steroid metabolism</keyword>
<sequence length="255" mass="27811">MERWRDRLALVTGASGGIGAAVARALVQQGLKVVGCARTVGNIEELAAECKSAGYPGTLIPYRCDLSNEEDILSMFSAVRSQHSGVDICINNAGLARPDTLLSGSTSGWKEMFNVNVLALSICTREACQSMRERKVDDGHIININSMCGHRVPPPAETHFYSATKYAVTALTEGLRQELREARSHIRATCISPGVVETQFAFKLHDKDPEKAAATYEHMKCLKPEDVAEAVIYVLSTPPHVQIGDIQMRPTEQVT</sequence>
<reference key="1">
    <citation type="submission" date="2005-08" db="EMBL/GenBank/DDBJ databases">
        <authorList>
            <consortium name="NIH - Mammalian Gene Collection (MGC) project"/>
        </authorList>
    </citation>
    <scope>NUCLEOTIDE SEQUENCE [LARGE SCALE MRNA]</scope>
    <source>
        <strain>Crossbred X Angus</strain>
        <tissue>Ileum</tissue>
    </source>
</reference>
<evidence type="ECO:0000250" key="1"/>
<evidence type="ECO:0000250" key="2">
    <source>
        <dbReference type="UniProtKB" id="Q6UWP2"/>
    </source>
</evidence>
<evidence type="ECO:0000255" key="3"/>
<evidence type="ECO:0000305" key="4"/>
<proteinExistence type="evidence at transcript level"/>
<name>DHR11_BOVIN</name>
<accession>Q3ZBV9</accession>
<protein>
    <recommendedName>
        <fullName>Dehydrogenase/reductase SDR family member 11</fullName>
    </recommendedName>
    <alternativeName>
        <fullName evidence="4">17-beta-hydroxysteroid dehydrogenase</fullName>
    </alternativeName>
    <alternativeName>
        <fullName evidence="4">3-beta-hydroxysteroid 3-dehydrogenase</fullName>
        <ecNumber evidence="2">1.1.1.270</ecNumber>
    </alternativeName>
    <alternativeName>
        <fullName evidence="4">Estradiol 17-beta-dehydrogenase</fullName>
        <ecNumber evidence="2">1.1.1.62</ecNumber>
    </alternativeName>
    <alternativeName>
        <fullName evidence="2">Short-chain dehydrogenase/reductase family 24C member 1</fullName>
    </alternativeName>
</protein>
<dbReference type="EC" id="1.1.1.270" evidence="2"/>
<dbReference type="EC" id="1.1.1.62" evidence="2"/>
<dbReference type="EMBL" id="BC103081">
    <property type="protein sequence ID" value="AAI03082.1"/>
    <property type="molecule type" value="mRNA"/>
</dbReference>
<dbReference type="RefSeq" id="NP_001030260.1">
    <property type="nucleotide sequence ID" value="NM_001035088.2"/>
</dbReference>
<dbReference type="SMR" id="Q3ZBV9"/>
<dbReference type="FunCoup" id="Q3ZBV9">
    <property type="interactions" value="167"/>
</dbReference>
<dbReference type="STRING" id="9913.ENSBTAP00000013600"/>
<dbReference type="PaxDb" id="9913-ENSBTAP00000013600"/>
<dbReference type="PeptideAtlas" id="Q3ZBV9"/>
<dbReference type="GeneID" id="510264"/>
<dbReference type="KEGG" id="bta:510264"/>
<dbReference type="CTD" id="79154"/>
<dbReference type="eggNOG" id="KOG1205">
    <property type="taxonomic scope" value="Eukaryota"/>
</dbReference>
<dbReference type="HOGENOM" id="CLU_010194_2_10_1"/>
<dbReference type="InParanoid" id="Q3ZBV9"/>
<dbReference type="OrthoDB" id="1933717at2759"/>
<dbReference type="TreeFam" id="TF324174"/>
<dbReference type="UniPathway" id="UPA00769"/>
<dbReference type="Proteomes" id="UP000009136">
    <property type="component" value="Unplaced"/>
</dbReference>
<dbReference type="GO" id="GO:0005576">
    <property type="term" value="C:extracellular region"/>
    <property type="evidence" value="ECO:0007669"/>
    <property type="project" value="UniProtKB-SubCell"/>
</dbReference>
<dbReference type="GO" id="GO:0000253">
    <property type="term" value="F:3-beta-hydroxysteroid 3-dehydrogenase (NADP+) activity"/>
    <property type="evidence" value="ECO:0007669"/>
    <property type="project" value="UniProtKB-EC"/>
</dbReference>
<dbReference type="GO" id="GO:0004303">
    <property type="term" value="F:estradiol 17-beta-dehydrogenase [NAD(P)+] activity"/>
    <property type="evidence" value="ECO:0007669"/>
    <property type="project" value="UniProtKB-EC"/>
</dbReference>
<dbReference type="GO" id="GO:0000166">
    <property type="term" value="F:nucleotide binding"/>
    <property type="evidence" value="ECO:0007669"/>
    <property type="project" value="UniProtKB-KW"/>
</dbReference>
<dbReference type="GO" id="GO:0006703">
    <property type="term" value="P:estrogen biosynthetic process"/>
    <property type="evidence" value="ECO:0007669"/>
    <property type="project" value="UniProtKB-UniPathway"/>
</dbReference>
<dbReference type="CDD" id="cd05343">
    <property type="entry name" value="Mgc4172-like_SDR_c"/>
    <property type="match status" value="1"/>
</dbReference>
<dbReference type="FunFam" id="3.40.50.720:FF:000047">
    <property type="entry name" value="NADP-dependent L-serine/L-allo-threonine dehydrogenase"/>
    <property type="match status" value="1"/>
</dbReference>
<dbReference type="Gene3D" id="3.40.50.720">
    <property type="entry name" value="NAD(P)-binding Rossmann-like Domain"/>
    <property type="match status" value="1"/>
</dbReference>
<dbReference type="InterPro" id="IPR036291">
    <property type="entry name" value="NAD(P)-bd_dom_sf"/>
</dbReference>
<dbReference type="InterPro" id="IPR002347">
    <property type="entry name" value="SDR_fam"/>
</dbReference>
<dbReference type="PANTHER" id="PTHR43115">
    <property type="entry name" value="DEHYDROGENASE/REDUCTASE SDR FAMILY MEMBER 11"/>
    <property type="match status" value="1"/>
</dbReference>
<dbReference type="PANTHER" id="PTHR43115:SF4">
    <property type="entry name" value="DEHYDROGENASE_REDUCTASE SDR FAMILY MEMBER 11"/>
    <property type="match status" value="1"/>
</dbReference>
<dbReference type="Pfam" id="PF00106">
    <property type="entry name" value="adh_short"/>
    <property type="match status" value="1"/>
</dbReference>
<dbReference type="PRINTS" id="PR00081">
    <property type="entry name" value="GDHRDH"/>
</dbReference>
<dbReference type="PRINTS" id="PR00080">
    <property type="entry name" value="SDRFAMILY"/>
</dbReference>
<dbReference type="SUPFAM" id="SSF51735">
    <property type="entry name" value="NAD(P)-binding Rossmann-fold domains"/>
    <property type="match status" value="1"/>
</dbReference>